<organism>
    <name type="scientific">Campylobacter jejuni subsp. jejuni serotype O:2 (strain ATCC 700819 / NCTC 11168)</name>
    <dbReference type="NCBI Taxonomy" id="192222"/>
    <lineage>
        <taxon>Bacteria</taxon>
        <taxon>Pseudomonadati</taxon>
        <taxon>Campylobacterota</taxon>
        <taxon>Epsilonproteobacteria</taxon>
        <taxon>Campylobacterales</taxon>
        <taxon>Campylobacteraceae</taxon>
        <taxon>Campylobacter</taxon>
    </lineage>
</organism>
<sequence>MENIIARRYAKAIASRADINDFYQNLCILNSAFVLPKFKNIIESNEIKKERKMEFLDSFFDIKNSSFQNFLRLLIENSRLECIPQIVKELERQKAFKENIFVGIVYSKEKLSQENLKDLEVKLNKKFDANIKLNNKISQDDSVKIELEELGYELSFSMKALQNKLNEYILKII</sequence>
<keyword id="KW-0066">ATP synthesis</keyword>
<keyword id="KW-0997">Cell inner membrane</keyword>
<keyword id="KW-1003">Cell membrane</keyword>
<keyword id="KW-0139">CF(1)</keyword>
<keyword id="KW-0375">Hydrogen ion transport</keyword>
<keyword id="KW-0406">Ion transport</keyword>
<keyword id="KW-0472">Membrane</keyword>
<keyword id="KW-1185">Reference proteome</keyword>
<keyword id="KW-0813">Transport</keyword>
<gene>
    <name evidence="1" type="primary">atpH</name>
    <name type="ordered locus">Cj0104</name>
</gene>
<comment type="function">
    <text evidence="1">F(1)F(0) ATP synthase produces ATP from ADP in the presence of a proton or sodium gradient. F-type ATPases consist of two structural domains, F(1) containing the extramembraneous catalytic core and F(0) containing the membrane proton channel, linked together by a central stalk and a peripheral stalk. During catalysis, ATP synthesis in the catalytic domain of F(1) is coupled via a rotary mechanism of the central stalk subunits to proton translocation.</text>
</comment>
<comment type="function">
    <text evidence="1">This protein is part of the stalk that links CF(0) to CF(1). It either transmits conformational changes from CF(0) to CF(1) or is implicated in proton conduction.</text>
</comment>
<comment type="subunit">
    <text evidence="1">F-type ATPases have 2 components, F(1) - the catalytic core - and F(0) - the membrane proton channel. F(1) has five subunits: alpha(3), beta(3), gamma(1), delta(1), epsilon(1). F(0) has three main subunits: a(1), b(2) and c(10-14). The alpha and beta chains form an alternating ring which encloses part of the gamma chain. F(1) is attached to F(0) by a central stalk formed by the gamma and epsilon chains, while a peripheral stalk is formed by the delta and b chains.</text>
</comment>
<comment type="subcellular location">
    <subcellularLocation>
        <location evidence="1">Cell inner membrane</location>
        <topology evidence="1">Peripheral membrane protein</topology>
    </subcellularLocation>
</comment>
<comment type="similarity">
    <text evidence="1">Belongs to the ATPase delta chain family.</text>
</comment>
<reference key="1">
    <citation type="journal article" date="2000" name="Nature">
        <title>The genome sequence of the food-borne pathogen Campylobacter jejuni reveals hypervariable sequences.</title>
        <authorList>
            <person name="Parkhill J."/>
            <person name="Wren B.W."/>
            <person name="Mungall K.L."/>
            <person name="Ketley J.M."/>
            <person name="Churcher C.M."/>
            <person name="Basham D."/>
            <person name="Chillingworth T."/>
            <person name="Davies R.M."/>
            <person name="Feltwell T."/>
            <person name="Holroyd S."/>
            <person name="Jagels K."/>
            <person name="Karlyshev A.V."/>
            <person name="Moule S."/>
            <person name="Pallen M.J."/>
            <person name="Penn C.W."/>
            <person name="Quail M.A."/>
            <person name="Rajandream M.A."/>
            <person name="Rutherford K.M."/>
            <person name="van Vliet A.H.M."/>
            <person name="Whitehead S."/>
            <person name="Barrell B.G."/>
        </authorList>
    </citation>
    <scope>NUCLEOTIDE SEQUENCE [LARGE SCALE GENOMIC DNA]</scope>
    <source>
        <strain>ATCC 700819 / NCTC 11168</strain>
    </source>
</reference>
<evidence type="ECO:0000255" key="1">
    <source>
        <dbReference type="HAMAP-Rule" id="MF_01416"/>
    </source>
</evidence>
<dbReference type="EMBL" id="AL111168">
    <property type="protein sequence ID" value="CAL34275.1"/>
    <property type="molecule type" value="Genomic_DNA"/>
</dbReference>
<dbReference type="PIR" id="H81426">
    <property type="entry name" value="H81426"/>
</dbReference>
<dbReference type="RefSeq" id="WP_002851861.1">
    <property type="nucleotide sequence ID" value="NZ_SZUC01000005.1"/>
</dbReference>
<dbReference type="RefSeq" id="YP_002343564.1">
    <property type="nucleotide sequence ID" value="NC_002163.1"/>
</dbReference>
<dbReference type="SMR" id="Q0PC33"/>
<dbReference type="IntAct" id="Q0PC33">
    <property type="interactions" value="13"/>
</dbReference>
<dbReference type="STRING" id="192222.Cj0104"/>
<dbReference type="PaxDb" id="192222-Cj0104"/>
<dbReference type="DNASU" id="904434"/>
<dbReference type="EnsemblBacteria" id="CAL34275">
    <property type="protein sequence ID" value="CAL34275"/>
    <property type="gene ID" value="Cj0104"/>
</dbReference>
<dbReference type="GeneID" id="904434"/>
<dbReference type="KEGG" id="cje:Cj0104"/>
<dbReference type="PATRIC" id="fig|192222.6.peg.102"/>
<dbReference type="eggNOG" id="COG0712">
    <property type="taxonomic scope" value="Bacteria"/>
</dbReference>
<dbReference type="HOGENOM" id="CLU_085114_3_1_7"/>
<dbReference type="OrthoDB" id="5339308at2"/>
<dbReference type="Proteomes" id="UP000000799">
    <property type="component" value="Chromosome"/>
</dbReference>
<dbReference type="GO" id="GO:0005886">
    <property type="term" value="C:plasma membrane"/>
    <property type="evidence" value="ECO:0007669"/>
    <property type="project" value="UniProtKB-SubCell"/>
</dbReference>
<dbReference type="GO" id="GO:0045259">
    <property type="term" value="C:proton-transporting ATP synthase complex"/>
    <property type="evidence" value="ECO:0007669"/>
    <property type="project" value="UniProtKB-KW"/>
</dbReference>
<dbReference type="GO" id="GO:0046933">
    <property type="term" value="F:proton-transporting ATP synthase activity, rotational mechanism"/>
    <property type="evidence" value="ECO:0007669"/>
    <property type="project" value="UniProtKB-UniRule"/>
</dbReference>
<dbReference type="Gene3D" id="1.10.520.20">
    <property type="entry name" value="N-terminal domain of the delta subunit of the F1F0-ATP synthase"/>
    <property type="match status" value="1"/>
</dbReference>
<dbReference type="HAMAP" id="MF_01416">
    <property type="entry name" value="ATP_synth_delta_bact"/>
    <property type="match status" value="1"/>
</dbReference>
<dbReference type="InterPro" id="IPR026015">
    <property type="entry name" value="ATP_synth_OSCP/delta_N_sf"/>
</dbReference>
<dbReference type="InterPro" id="IPR000711">
    <property type="entry name" value="ATPase_OSCP/dsu"/>
</dbReference>
<dbReference type="NCBIfam" id="TIGR01145">
    <property type="entry name" value="ATP_synt_delta"/>
    <property type="match status" value="1"/>
</dbReference>
<dbReference type="NCBIfam" id="NF006291">
    <property type="entry name" value="PRK08474.1"/>
    <property type="match status" value="1"/>
</dbReference>
<dbReference type="PANTHER" id="PTHR11910">
    <property type="entry name" value="ATP SYNTHASE DELTA CHAIN"/>
    <property type="match status" value="1"/>
</dbReference>
<dbReference type="Pfam" id="PF00213">
    <property type="entry name" value="OSCP"/>
    <property type="match status" value="1"/>
</dbReference>
<dbReference type="PRINTS" id="PR00125">
    <property type="entry name" value="ATPASEDELTA"/>
</dbReference>
<dbReference type="SUPFAM" id="SSF47928">
    <property type="entry name" value="N-terminal domain of the delta subunit of the F1F0-ATP synthase"/>
    <property type="match status" value="1"/>
</dbReference>
<protein>
    <recommendedName>
        <fullName evidence="1">ATP synthase subunit delta</fullName>
    </recommendedName>
    <alternativeName>
        <fullName evidence="1">ATP synthase F(1) sector subunit delta</fullName>
    </alternativeName>
    <alternativeName>
        <fullName evidence="1">F-type ATPase subunit delta</fullName>
        <shortName evidence="1">F-ATPase subunit delta</shortName>
    </alternativeName>
</protein>
<feature type="chain" id="PRO_0000382073" description="ATP synthase subunit delta">
    <location>
        <begin position="1"/>
        <end position="173"/>
    </location>
</feature>
<accession>Q0PC33</accession>
<name>ATPD_CAMJE</name>
<proteinExistence type="inferred from homology"/>